<proteinExistence type="inferred from homology"/>
<dbReference type="EC" id="2.6.1.62" evidence="1"/>
<dbReference type="EMBL" id="AE000511">
    <property type="protein sequence ID" value="AAD08022.1"/>
    <property type="molecule type" value="Genomic_DNA"/>
</dbReference>
<dbReference type="PIR" id="H64641">
    <property type="entry name" value="H64641"/>
</dbReference>
<dbReference type="RefSeq" id="NP_207767.1">
    <property type="nucleotide sequence ID" value="NC_000915.1"/>
</dbReference>
<dbReference type="RefSeq" id="WP_001010809.1">
    <property type="nucleotide sequence ID" value="NC_018939.1"/>
</dbReference>
<dbReference type="SMR" id="O25627"/>
<dbReference type="DIP" id="DIP-3676N"/>
<dbReference type="FunCoup" id="O25627">
    <property type="interactions" value="154"/>
</dbReference>
<dbReference type="IntAct" id="O25627">
    <property type="interactions" value="1"/>
</dbReference>
<dbReference type="MINT" id="O25627"/>
<dbReference type="STRING" id="85962.HP_0976"/>
<dbReference type="PaxDb" id="85962-C694_05025"/>
<dbReference type="EnsemblBacteria" id="AAD08022">
    <property type="protein sequence ID" value="AAD08022"/>
    <property type="gene ID" value="HP_0976"/>
</dbReference>
<dbReference type="KEGG" id="heo:C694_05025"/>
<dbReference type="KEGG" id="hpy:HP_0976"/>
<dbReference type="PATRIC" id="fig|85962.47.peg.1044"/>
<dbReference type="eggNOG" id="COG0161">
    <property type="taxonomic scope" value="Bacteria"/>
</dbReference>
<dbReference type="InParanoid" id="O25627"/>
<dbReference type="OrthoDB" id="9801834at2"/>
<dbReference type="PhylomeDB" id="O25627"/>
<dbReference type="UniPathway" id="UPA00078">
    <property type="reaction ID" value="UER00160"/>
</dbReference>
<dbReference type="Proteomes" id="UP000000429">
    <property type="component" value="Chromosome"/>
</dbReference>
<dbReference type="GO" id="GO:0005737">
    <property type="term" value="C:cytoplasm"/>
    <property type="evidence" value="ECO:0007669"/>
    <property type="project" value="UniProtKB-SubCell"/>
</dbReference>
<dbReference type="GO" id="GO:0004015">
    <property type="term" value="F:adenosylmethionine-8-amino-7-oxononanoate transaminase activity"/>
    <property type="evidence" value="ECO:0000318"/>
    <property type="project" value="GO_Central"/>
</dbReference>
<dbReference type="GO" id="GO:0030170">
    <property type="term" value="F:pyridoxal phosphate binding"/>
    <property type="evidence" value="ECO:0007669"/>
    <property type="project" value="UniProtKB-UniRule"/>
</dbReference>
<dbReference type="GO" id="GO:0009102">
    <property type="term" value="P:biotin biosynthetic process"/>
    <property type="evidence" value="ECO:0000318"/>
    <property type="project" value="GO_Central"/>
</dbReference>
<dbReference type="CDD" id="cd00610">
    <property type="entry name" value="OAT_like"/>
    <property type="match status" value="1"/>
</dbReference>
<dbReference type="Gene3D" id="3.90.1150.10">
    <property type="entry name" value="Aspartate Aminotransferase, domain 1"/>
    <property type="match status" value="1"/>
</dbReference>
<dbReference type="Gene3D" id="3.40.640.10">
    <property type="entry name" value="Type I PLP-dependent aspartate aminotransferase-like (Major domain)"/>
    <property type="match status" value="1"/>
</dbReference>
<dbReference type="HAMAP" id="MF_00834">
    <property type="entry name" value="BioA"/>
    <property type="match status" value="1"/>
</dbReference>
<dbReference type="InterPro" id="IPR005814">
    <property type="entry name" value="Aminotrans_3"/>
</dbReference>
<dbReference type="InterPro" id="IPR049704">
    <property type="entry name" value="Aminotrans_3_PPA_site"/>
</dbReference>
<dbReference type="InterPro" id="IPR005815">
    <property type="entry name" value="BioA"/>
</dbReference>
<dbReference type="InterPro" id="IPR015424">
    <property type="entry name" value="PyrdxlP-dep_Trfase"/>
</dbReference>
<dbReference type="InterPro" id="IPR015421">
    <property type="entry name" value="PyrdxlP-dep_Trfase_major"/>
</dbReference>
<dbReference type="InterPro" id="IPR015422">
    <property type="entry name" value="PyrdxlP-dep_Trfase_small"/>
</dbReference>
<dbReference type="NCBIfam" id="TIGR00508">
    <property type="entry name" value="bioA"/>
    <property type="match status" value="1"/>
</dbReference>
<dbReference type="NCBIfam" id="NF004624">
    <property type="entry name" value="PRK05964.1"/>
    <property type="match status" value="1"/>
</dbReference>
<dbReference type="PANTHER" id="PTHR42684">
    <property type="entry name" value="ADENOSYLMETHIONINE-8-AMINO-7-OXONONANOATE AMINOTRANSFERASE"/>
    <property type="match status" value="1"/>
</dbReference>
<dbReference type="PANTHER" id="PTHR42684:SF17">
    <property type="entry name" value="ADENOSYLMETHIONINE-8-AMINO-7-OXONONANOATE AMINOTRANSFERASE"/>
    <property type="match status" value="1"/>
</dbReference>
<dbReference type="Pfam" id="PF00202">
    <property type="entry name" value="Aminotran_3"/>
    <property type="match status" value="1"/>
</dbReference>
<dbReference type="PIRSF" id="PIRSF000521">
    <property type="entry name" value="Transaminase_4ab_Lys_Orn"/>
    <property type="match status" value="1"/>
</dbReference>
<dbReference type="SUPFAM" id="SSF53383">
    <property type="entry name" value="PLP-dependent transferases"/>
    <property type="match status" value="1"/>
</dbReference>
<dbReference type="PROSITE" id="PS00600">
    <property type="entry name" value="AA_TRANSFER_CLASS_3"/>
    <property type="match status" value="1"/>
</dbReference>
<protein>
    <recommendedName>
        <fullName evidence="1">Adenosylmethionine-8-amino-7-oxononanoate aminotransferase</fullName>
        <ecNumber evidence="1">2.6.1.62</ecNumber>
    </recommendedName>
    <alternativeName>
        <fullName evidence="1">7,8-diamino-pelargonic acid aminotransferase</fullName>
        <shortName evidence="1">DAPA AT</shortName>
        <shortName evidence="1">DAPA aminotransferase</shortName>
    </alternativeName>
    <alternativeName>
        <fullName evidence="1">7,8-diaminononanoate synthase</fullName>
        <shortName evidence="1">DANS</shortName>
    </alternativeName>
    <alternativeName>
        <fullName evidence="1">Diaminopelargonic acid synthase</fullName>
    </alternativeName>
</protein>
<feature type="chain" id="PRO_0000120370" description="Adenosylmethionine-8-amino-7-oxononanoate aminotransferase">
    <location>
        <begin position="1"/>
        <end position="436"/>
    </location>
</feature>
<feature type="binding site" evidence="1">
    <location>
        <position position="56"/>
    </location>
    <ligand>
        <name>substrate</name>
    </ligand>
</feature>
<feature type="binding site" evidence="1">
    <location>
        <begin position="114"/>
        <end position="115"/>
    </location>
    <ligand>
        <name>pyridoxal 5'-phosphate</name>
        <dbReference type="ChEBI" id="CHEBI:597326"/>
    </ligand>
</feature>
<feature type="binding site" evidence="1">
    <location>
        <position position="148"/>
    </location>
    <ligand>
        <name>substrate</name>
    </ligand>
</feature>
<feature type="binding site" evidence="1">
    <location>
        <position position="245"/>
    </location>
    <ligand>
        <name>pyridoxal 5'-phosphate</name>
        <dbReference type="ChEBI" id="CHEBI:597326"/>
    </ligand>
</feature>
<feature type="binding site" evidence="1">
    <location>
        <position position="274"/>
    </location>
    <ligand>
        <name>substrate</name>
    </ligand>
</feature>
<feature type="binding site" evidence="1">
    <location>
        <position position="309"/>
    </location>
    <ligand>
        <name>substrate</name>
    </ligand>
</feature>
<feature type="binding site" evidence="1">
    <location>
        <position position="400"/>
    </location>
    <ligand>
        <name>substrate</name>
    </ligand>
</feature>
<feature type="site" description="Participates in the substrate recognition with KAPA and in a stacking interaction with the adenine ring of SAM" evidence="1">
    <location>
        <position position="19"/>
    </location>
</feature>
<feature type="modified residue" description="N6-(pyridoxal phosphate)lysine" evidence="1">
    <location>
        <position position="274"/>
    </location>
</feature>
<name>BIOA_HELPY</name>
<evidence type="ECO:0000255" key="1">
    <source>
        <dbReference type="HAMAP-Rule" id="MF_00834"/>
    </source>
</evidence>
<accession>O25627</accession>
<gene>
    <name evidence="1" type="primary">bioA</name>
    <name type="ordered locus">HP_0976</name>
</gene>
<keyword id="KW-0032">Aminotransferase</keyword>
<keyword id="KW-0093">Biotin biosynthesis</keyword>
<keyword id="KW-0963">Cytoplasm</keyword>
<keyword id="KW-0663">Pyridoxal phosphate</keyword>
<keyword id="KW-1185">Reference proteome</keyword>
<keyword id="KW-0949">S-adenosyl-L-methionine</keyword>
<keyword id="KW-0808">Transferase</keyword>
<comment type="function">
    <text evidence="1">Catalyzes the transfer of the alpha-amino group from S-adenosyl-L-methionine (SAM) to 7-keto-8-aminopelargonic acid (KAPA) to form 7,8-diaminopelargonic acid (DAPA). It is the only aminotransferase known to utilize SAM as an amino donor.</text>
</comment>
<comment type="catalytic activity">
    <reaction evidence="1">
        <text>(8S)-8-amino-7-oxononanoate + S-adenosyl-L-methionine = S-adenosyl-4-methylsulfanyl-2-oxobutanoate + (7R,8S)-7,8-diammoniononanoate</text>
        <dbReference type="Rhea" id="RHEA:16861"/>
        <dbReference type="ChEBI" id="CHEBI:16490"/>
        <dbReference type="ChEBI" id="CHEBI:59789"/>
        <dbReference type="ChEBI" id="CHEBI:149468"/>
        <dbReference type="ChEBI" id="CHEBI:149469"/>
        <dbReference type="EC" id="2.6.1.62"/>
    </reaction>
</comment>
<comment type="cofactor">
    <cofactor evidence="1">
        <name>pyridoxal 5'-phosphate</name>
        <dbReference type="ChEBI" id="CHEBI:597326"/>
    </cofactor>
</comment>
<comment type="pathway">
    <text evidence="1">Cofactor biosynthesis; biotin biosynthesis; 7,8-diaminononanoate from 8-amino-7-oxononanoate (SAM route): step 1/1.</text>
</comment>
<comment type="subunit">
    <text evidence="1">Homodimer.</text>
</comment>
<comment type="subcellular location">
    <subcellularLocation>
        <location evidence="1">Cytoplasm</location>
    </subcellularLocation>
</comment>
<comment type="similarity">
    <text evidence="1">Belongs to the class-III pyridoxal-phosphate-dependent aminotransferase family. BioA subfamily.</text>
</comment>
<reference key="1">
    <citation type="journal article" date="1997" name="Nature">
        <title>The complete genome sequence of the gastric pathogen Helicobacter pylori.</title>
        <authorList>
            <person name="Tomb J.-F."/>
            <person name="White O."/>
            <person name="Kerlavage A.R."/>
            <person name="Clayton R.A."/>
            <person name="Sutton G.G."/>
            <person name="Fleischmann R.D."/>
            <person name="Ketchum K.A."/>
            <person name="Klenk H.-P."/>
            <person name="Gill S.R."/>
            <person name="Dougherty B.A."/>
            <person name="Nelson K.E."/>
            <person name="Quackenbush J."/>
            <person name="Zhou L."/>
            <person name="Kirkness E.F."/>
            <person name="Peterson S.N."/>
            <person name="Loftus B.J."/>
            <person name="Richardson D.L."/>
            <person name="Dodson R.J."/>
            <person name="Khalak H.G."/>
            <person name="Glodek A."/>
            <person name="McKenney K."/>
            <person name="FitzGerald L.M."/>
            <person name="Lee N."/>
            <person name="Adams M.D."/>
            <person name="Hickey E.K."/>
            <person name="Berg D.E."/>
            <person name="Gocayne J.D."/>
            <person name="Utterback T.R."/>
            <person name="Peterson J.D."/>
            <person name="Kelley J.M."/>
            <person name="Cotton M.D."/>
            <person name="Weidman J.F."/>
            <person name="Fujii C."/>
            <person name="Bowman C."/>
            <person name="Watthey L."/>
            <person name="Wallin E."/>
            <person name="Hayes W.S."/>
            <person name="Borodovsky M."/>
            <person name="Karp P.D."/>
            <person name="Smith H.O."/>
            <person name="Fraser C.M."/>
            <person name="Venter J.C."/>
        </authorList>
    </citation>
    <scope>NUCLEOTIDE SEQUENCE [LARGE SCALE GENOMIC DNA]</scope>
    <source>
        <strain>ATCC 700392 / 26695</strain>
    </source>
</reference>
<sequence>MNFQENLAALDLEYLWHPCSQMQEHQNFPIIPIKKAQGIYLYDFNDNAYMDLISSWWVNLFGHNNAYISQQLKNQIDDLEHVLLASFSHKPIITLSQRLCQLTHMDKCFYADNGSSCVEIALKMSYHAHFLKNQTRRKKLFLSLSNSYHGETLGALSVGDVKLYKDTYTPLLLKNLTTPVPKNDHEIENSLNALKRLLDKHSEEICAFIAEPLLQCAGNMHIYSARYLKQAVLLCKQKNIHIIFDEIATGFGRTGSMFAYEQCEIKPDFLCLSKGISGGYLPLSALLTHNEIYNQFYAPYEENKAFLHSHSYTGNALACACANATLDIFEKENVIEKNKALSGFIFNTLQNALKPLMEQQVVSDLRHLGMVFAFEVFIQTKERLSLAVFKKTLKKGLLLRPLNNTIYLMPPYIITHEEVKKAVAGLVEILDELRKG</sequence>
<organism>
    <name type="scientific">Helicobacter pylori (strain ATCC 700392 / 26695)</name>
    <name type="common">Campylobacter pylori</name>
    <dbReference type="NCBI Taxonomy" id="85962"/>
    <lineage>
        <taxon>Bacteria</taxon>
        <taxon>Pseudomonadati</taxon>
        <taxon>Campylobacterota</taxon>
        <taxon>Epsilonproteobacteria</taxon>
        <taxon>Campylobacterales</taxon>
        <taxon>Helicobacteraceae</taxon>
        <taxon>Helicobacter</taxon>
    </lineage>
</organism>